<evidence type="ECO:0000255" key="1">
    <source>
        <dbReference type="HAMAP-Rule" id="MF_00328"/>
    </source>
</evidence>
<reference key="1">
    <citation type="journal article" date="2002" name="J. Bacteriol.">
        <title>Genome sequence and analysis of the oral bacterium Fusobacterium nucleatum strain ATCC 25586.</title>
        <authorList>
            <person name="Kapatral V."/>
            <person name="Anderson I."/>
            <person name="Ivanova N."/>
            <person name="Reznik G."/>
            <person name="Los T."/>
            <person name="Lykidis A."/>
            <person name="Bhattacharyya A."/>
            <person name="Bartman A."/>
            <person name="Gardner W."/>
            <person name="Grechkin G."/>
            <person name="Zhu L."/>
            <person name="Vasieva O."/>
            <person name="Chu L."/>
            <person name="Kogan Y."/>
            <person name="Chaga O."/>
            <person name="Goltsman E."/>
            <person name="Bernal A."/>
            <person name="Larsen N."/>
            <person name="D'Souza M."/>
            <person name="Walunas T."/>
            <person name="Pusch G."/>
            <person name="Haselkorn R."/>
            <person name="Fonstein M."/>
            <person name="Kyrpides N.C."/>
            <person name="Overbeek R."/>
        </authorList>
    </citation>
    <scope>NUCLEOTIDE SEQUENCE [LARGE SCALE GENOMIC DNA]</scope>
    <source>
        <strain>ATCC 25586 / DSM 15643 / BCRC 10681 / CIP 101130 / JCM 8532 / KCTC 2640 / LMG 13131 / VPI 4355</strain>
    </source>
</reference>
<keyword id="KW-0067">ATP-binding</keyword>
<keyword id="KW-0963">Cytoplasm</keyword>
<keyword id="KW-0418">Kinase</keyword>
<keyword id="KW-0547">Nucleotide-binding</keyword>
<keyword id="KW-1185">Reference proteome</keyword>
<keyword id="KW-0808">Transferase</keyword>
<accession>Q8RHI9</accession>
<organism>
    <name type="scientific">Fusobacterium nucleatum subsp. nucleatum (strain ATCC 25586 / DSM 15643 / BCRC 10681 / CIP 101130 / JCM 8532 / KCTC 2640 / LMG 13131 / VPI 4355)</name>
    <dbReference type="NCBI Taxonomy" id="190304"/>
    <lineage>
        <taxon>Bacteria</taxon>
        <taxon>Fusobacteriati</taxon>
        <taxon>Fusobacteriota</taxon>
        <taxon>Fusobacteriia</taxon>
        <taxon>Fusobacteriales</taxon>
        <taxon>Fusobacteriaceae</taxon>
        <taxon>Fusobacterium</taxon>
    </lineage>
</organism>
<feature type="chain" id="PRO_0000170540" description="Guanylate kinase">
    <location>
        <begin position="1"/>
        <end position="185"/>
    </location>
</feature>
<feature type="domain" description="Guanylate kinase-like" evidence="1">
    <location>
        <begin position="4"/>
        <end position="181"/>
    </location>
</feature>
<feature type="binding site" evidence="1">
    <location>
        <begin position="11"/>
        <end position="18"/>
    </location>
    <ligand>
        <name>ATP</name>
        <dbReference type="ChEBI" id="CHEBI:30616"/>
    </ligand>
</feature>
<comment type="function">
    <text evidence="1">Essential for recycling GMP and indirectly, cGMP.</text>
</comment>
<comment type="catalytic activity">
    <reaction evidence="1">
        <text>GMP + ATP = GDP + ADP</text>
        <dbReference type="Rhea" id="RHEA:20780"/>
        <dbReference type="ChEBI" id="CHEBI:30616"/>
        <dbReference type="ChEBI" id="CHEBI:58115"/>
        <dbReference type="ChEBI" id="CHEBI:58189"/>
        <dbReference type="ChEBI" id="CHEBI:456216"/>
        <dbReference type="EC" id="2.7.4.8"/>
    </reaction>
</comment>
<comment type="subcellular location">
    <subcellularLocation>
        <location evidence="1">Cytoplasm</location>
    </subcellularLocation>
</comment>
<comment type="similarity">
    <text evidence="1">Belongs to the guanylate kinase family.</text>
</comment>
<protein>
    <recommendedName>
        <fullName evidence="1">Guanylate kinase</fullName>
        <ecNumber evidence="1">2.7.4.8</ecNumber>
    </recommendedName>
    <alternativeName>
        <fullName evidence="1">GMP kinase</fullName>
    </alternativeName>
</protein>
<proteinExistence type="inferred from homology"/>
<name>KGUA_FUSNN</name>
<dbReference type="EC" id="2.7.4.8" evidence="1"/>
<dbReference type="EMBL" id="AE009951">
    <property type="protein sequence ID" value="AAL94118.1"/>
    <property type="molecule type" value="Genomic_DNA"/>
</dbReference>
<dbReference type="RefSeq" id="NP_602819.1">
    <property type="nucleotide sequence ID" value="NC_003454.1"/>
</dbReference>
<dbReference type="RefSeq" id="WP_005904066.1">
    <property type="nucleotide sequence ID" value="NZ_OZ209243.1"/>
</dbReference>
<dbReference type="SMR" id="Q8RHI9"/>
<dbReference type="FunCoup" id="Q8RHI9">
    <property type="interactions" value="313"/>
</dbReference>
<dbReference type="STRING" id="190304.FN2033"/>
<dbReference type="PaxDb" id="190304-FN2033"/>
<dbReference type="EnsemblBacteria" id="AAL94118">
    <property type="protein sequence ID" value="AAL94118"/>
    <property type="gene ID" value="FN2033"/>
</dbReference>
<dbReference type="GeneID" id="79782960"/>
<dbReference type="KEGG" id="fnu:FN2033"/>
<dbReference type="PATRIC" id="fig|190304.8.peg.496"/>
<dbReference type="eggNOG" id="COG0194">
    <property type="taxonomic scope" value="Bacteria"/>
</dbReference>
<dbReference type="HOGENOM" id="CLU_001715_1_1_0"/>
<dbReference type="InParanoid" id="Q8RHI9"/>
<dbReference type="BioCyc" id="FNUC190304:G1FZS-520-MONOMER"/>
<dbReference type="Proteomes" id="UP000002521">
    <property type="component" value="Chromosome"/>
</dbReference>
<dbReference type="GO" id="GO:0005829">
    <property type="term" value="C:cytosol"/>
    <property type="evidence" value="ECO:0000318"/>
    <property type="project" value="GO_Central"/>
</dbReference>
<dbReference type="GO" id="GO:0005524">
    <property type="term" value="F:ATP binding"/>
    <property type="evidence" value="ECO:0007669"/>
    <property type="project" value="UniProtKB-UniRule"/>
</dbReference>
<dbReference type="GO" id="GO:0004385">
    <property type="term" value="F:guanylate kinase activity"/>
    <property type="evidence" value="ECO:0000318"/>
    <property type="project" value="GO_Central"/>
</dbReference>
<dbReference type="CDD" id="cd00071">
    <property type="entry name" value="GMPK"/>
    <property type="match status" value="1"/>
</dbReference>
<dbReference type="FunFam" id="3.30.63.10:FF:000005">
    <property type="entry name" value="Guanylate kinase"/>
    <property type="match status" value="1"/>
</dbReference>
<dbReference type="Gene3D" id="3.30.63.10">
    <property type="entry name" value="Guanylate Kinase phosphate binding domain"/>
    <property type="match status" value="1"/>
</dbReference>
<dbReference type="Gene3D" id="3.40.50.300">
    <property type="entry name" value="P-loop containing nucleotide triphosphate hydrolases"/>
    <property type="match status" value="1"/>
</dbReference>
<dbReference type="HAMAP" id="MF_00328">
    <property type="entry name" value="Guanylate_kinase"/>
    <property type="match status" value="1"/>
</dbReference>
<dbReference type="InterPro" id="IPR008145">
    <property type="entry name" value="GK/Ca_channel_bsu"/>
</dbReference>
<dbReference type="InterPro" id="IPR008144">
    <property type="entry name" value="Guanylate_kin-like_dom"/>
</dbReference>
<dbReference type="InterPro" id="IPR017665">
    <property type="entry name" value="Guanylate_kinase"/>
</dbReference>
<dbReference type="InterPro" id="IPR020590">
    <property type="entry name" value="Guanylate_kinase_CS"/>
</dbReference>
<dbReference type="InterPro" id="IPR027417">
    <property type="entry name" value="P-loop_NTPase"/>
</dbReference>
<dbReference type="NCBIfam" id="TIGR03263">
    <property type="entry name" value="guanyl_kin"/>
    <property type="match status" value="1"/>
</dbReference>
<dbReference type="PANTHER" id="PTHR23117:SF13">
    <property type="entry name" value="GUANYLATE KINASE"/>
    <property type="match status" value="1"/>
</dbReference>
<dbReference type="PANTHER" id="PTHR23117">
    <property type="entry name" value="GUANYLATE KINASE-RELATED"/>
    <property type="match status" value="1"/>
</dbReference>
<dbReference type="Pfam" id="PF00625">
    <property type="entry name" value="Guanylate_kin"/>
    <property type="match status" value="1"/>
</dbReference>
<dbReference type="SMART" id="SM00072">
    <property type="entry name" value="GuKc"/>
    <property type="match status" value="1"/>
</dbReference>
<dbReference type="SUPFAM" id="SSF52540">
    <property type="entry name" value="P-loop containing nucleoside triphosphate hydrolases"/>
    <property type="match status" value="1"/>
</dbReference>
<dbReference type="PROSITE" id="PS00856">
    <property type="entry name" value="GUANYLATE_KINASE_1"/>
    <property type="match status" value="1"/>
</dbReference>
<dbReference type="PROSITE" id="PS50052">
    <property type="entry name" value="GUANYLATE_KINASE_2"/>
    <property type="match status" value="1"/>
</dbReference>
<sequence>MSLGALYVVSGPSGAGKSTVCKLVRERLGINLSISATSRKPRNGEQEGVDYFFITAEEFERKIKNDDFLEYANVHGNYYGTLKSEVEERLKRGEKVLLEIDVQGGVQVKNKFPEANLIFFKTANKEELEKRLRGRNTDSEEVIQARLKNSLKELEYESKYDRVIINNEIEQACNDLISIIENGVK</sequence>
<gene>
    <name evidence="1" type="primary">gmk</name>
    <name type="ordered locus">FN2033</name>
</gene>